<protein>
    <recommendedName>
        <fullName>NADH dehydrogenase [ubiquinone] 1 alpha subcomplex subunit 10, mitochondrial</fullName>
    </recommendedName>
    <alternativeName>
        <fullName>Complex I-42kD</fullName>
        <shortName>CI-42kD</shortName>
    </alternativeName>
    <alternativeName>
        <fullName>NADH-ubiquinone oxidoreductase 42 kDa subunit</fullName>
    </alternativeName>
</protein>
<evidence type="ECO:0000250" key="1"/>
<evidence type="ECO:0000250" key="2">
    <source>
        <dbReference type="UniProtKB" id="O95299"/>
    </source>
</evidence>
<evidence type="ECO:0000250" key="3">
    <source>
        <dbReference type="UniProtKB" id="P34942"/>
    </source>
</evidence>
<evidence type="ECO:0000250" key="4">
    <source>
        <dbReference type="UniProtKB" id="Q99LC3"/>
    </source>
</evidence>
<evidence type="ECO:0000305" key="5"/>
<name>NDUAA_PONPY</name>
<accession>P0CB90</accession>
<accession>Q0MQB5</accession>
<accession>Q5R9E8</accession>
<gene>
    <name type="primary">NDUFA10</name>
</gene>
<feature type="transit peptide" description="Mitochondrion" evidence="3">
    <location>
        <begin position="1"/>
        <end position="35"/>
    </location>
</feature>
<feature type="chain" id="PRO_0000389248" description="NADH dehydrogenase [ubiquinone] 1 alpha subcomplex subunit 10, mitochondrial">
    <location>
        <begin position="36"/>
        <end position="355"/>
    </location>
</feature>
<feature type="modified residue" description="Phosphoserine; by PINK1" evidence="4">
    <location>
        <position position="250"/>
    </location>
</feature>
<feature type="modified residue" description="N6-succinyllysine" evidence="4">
    <location>
        <position position="285"/>
    </location>
</feature>
<keyword id="KW-0249">Electron transport</keyword>
<keyword id="KW-0274">FAD</keyword>
<keyword id="KW-0285">Flavoprotein</keyword>
<keyword id="KW-0496">Mitochondrion</keyword>
<keyword id="KW-0597">Phosphoprotein</keyword>
<keyword id="KW-0679">Respiratory chain</keyword>
<keyword id="KW-0809">Transit peptide</keyword>
<keyword id="KW-0813">Transport</keyword>
<reference key="1">
    <citation type="journal article" date="2006" name="Gene">
        <title>Adaptive selection of mitochondrial complex I subunits during primate radiation.</title>
        <authorList>
            <person name="Mishmar D."/>
            <person name="Ruiz-Pesini E."/>
            <person name="Mondragon-Palomino M."/>
            <person name="Procaccio V."/>
            <person name="Gaut B."/>
            <person name="Wallace D.C."/>
        </authorList>
    </citation>
    <scope>NUCLEOTIDE SEQUENCE [MRNA]</scope>
</reference>
<comment type="function">
    <text evidence="2">Accessory subunit of the mitochondrial membrane respiratory chain NADH dehydrogenase (Complex I), that is believed not to be involved in catalysis. Complex I functions in the transfer of electrons from NADH to the respiratory chain. The immediate electron acceptor for the enzyme is believed to be ubiquinone.</text>
</comment>
<comment type="cofactor">
    <cofactor evidence="1">
        <name>FAD</name>
        <dbReference type="ChEBI" id="CHEBI:57692"/>
    </cofactor>
    <text evidence="1">Binds 1 FAD per subunit.</text>
</comment>
<comment type="subunit">
    <text evidence="2">Complex I is composed of 45 different subunits. This a component of the hydrophobic protein fraction.</text>
</comment>
<comment type="subcellular location">
    <subcellularLocation>
        <location evidence="2">Mitochondrion matrix</location>
    </subcellularLocation>
</comment>
<comment type="PTM">
    <text evidence="4">Phosphorylation at Ser-250 by PINK1 is required for the binding and/or reduction of the complex I substrate ubiquinone.</text>
</comment>
<comment type="similarity">
    <text evidence="5">Belongs to the complex I NDUFA10 subunit family.</text>
</comment>
<sequence length="355" mass="40702">MALRLLKLGATSASVRVVAAGAQRVRGIHSSVQCKLXYGMWRFLLGDKASKRLTEHSRVITVDGNICTGKGKLAKEIAEKLGFKHFPEAGIHYPDSITGDGKPLAADYNGNCSLEKFYDDPRSNDGNTYRLQSWLYSSRLLQYSDALEHLLTTGQGVVLERSIFSDFVFLDAMYNQGFIRKQCVDHYNEVKSVTICDYLPPHLVIYIDVPVPEVQRRIQKKGDPHEMKITSAYLQDIENAYKKTFLPEMSEKCEVLQYSAREAQDSKKVVEDIEYLKFDKGPWLKQDNRTLYHLRLLVQDKFEVLNYTSIPIFLPEVTIGAHQTDRVLHQFRELPGRKYSPGYNTEVGDKWIWLK</sequence>
<organism>
    <name type="scientific">Pongo pygmaeus</name>
    <name type="common">Bornean orangutan</name>
    <dbReference type="NCBI Taxonomy" id="9600"/>
    <lineage>
        <taxon>Eukaryota</taxon>
        <taxon>Metazoa</taxon>
        <taxon>Chordata</taxon>
        <taxon>Craniata</taxon>
        <taxon>Vertebrata</taxon>
        <taxon>Euteleostomi</taxon>
        <taxon>Mammalia</taxon>
        <taxon>Eutheria</taxon>
        <taxon>Euarchontoglires</taxon>
        <taxon>Primates</taxon>
        <taxon>Haplorrhini</taxon>
        <taxon>Catarrhini</taxon>
        <taxon>Hominidae</taxon>
        <taxon>Pongo</taxon>
    </lineage>
</organism>
<dbReference type="EMBL" id="DQ885719">
    <property type="protein sequence ID" value="ABH12228.1"/>
    <property type="molecule type" value="mRNA"/>
</dbReference>
<dbReference type="GO" id="GO:0005759">
    <property type="term" value="C:mitochondrial matrix"/>
    <property type="evidence" value="ECO:0007669"/>
    <property type="project" value="UniProtKB-SubCell"/>
</dbReference>
<dbReference type="GO" id="GO:0045271">
    <property type="term" value="C:respiratory chain complex I"/>
    <property type="evidence" value="ECO:0000250"/>
    <property type="project" value="UniProtKB"/>
</dbReference>
<dbReference type="GO" id="GO:0006120">
    <property type="term" value="P:mitochondrial electron transport, NADH to ubiquinone"/>
    <property type="evidence" value="ECO:0007669"/>
    <property type="project" value="InterPro"/>
</dbReference>
<dbReference type="CDD" id="cd02030">
    <property type="entry name" value="NDUO42"/>
    <property type="match status" value="1"/>
</dbReference>
<dbReference type="FunFam" id="3.40.50.300:FF:000837">
    <property type="entry name" value="NADH dehydrogenase [ubiquinone] 1 alpha subcomplex subunit 10, mitochondrial"/>
    <property type="match status" value="1"/>
</dbReference>
<dbReference type="Gene3D" id="3.40.50.300">
    <property type="entry name" value="P-loop containing nucleotide triphosphate hydrolases"/>
    <property type="match status" value="1"/>
</dbReference>
<dbReference type="InterPro" id="IPR050566">
    <property type="entry name" value="Deoxyribonucleoside_kinase"/>
</dbReference>
<dbReference type="InterPro" id="IPR031314">
    <property type="entry name" value="DNK_dom"/>
</dbReference>
<dbReference type="InterPro" id="IPR015828">
    <property type="entry name" value="NDUFA10"/>
</dbReference>
<dbReference type="InterPro" id="IPR027417">
    <property type="entry name" value="P-loop_NTPase"/>
</dbReference>
<dbReference type="PANTHER" id="PTHR10513">
    <property type="entry name" value="DEOXYNUCLEOSIDE KINASE"/>
    <property type="match status" value="1"/>
</dbReference>
<dbReference type="PANTHER" id="PTHR10513:SF15">
    <property type="entry name" value="NADH DEHYDROGENASE [UBIQUINONE] 1 ALPHA SUBCOMPLEX SUBUNIT 10, MITOCHONDRIAL"/>
    <property type="match status" value="1"/>
</dbReference>
<dbReference type="Pfam" id="PF01712">
    <property type="entry name" value="dNK"/>
    <property type="match status" value="1"/>
</dbReference>
<dbReference type="PIRSF" id="PIRSF000543">
    <property type="entry name" value="NADH_UQ_42KD"/>
    <property type="match status" value="1"/>
</dbReference>
<dbReference type="SUPFAM" id="SSF52540">
    <property type="entry name" value="P-loop containing nucleoside triphosphate hydrolases"/>
    <property type="match status" value="1"/>
</dbReference>
<proteinExistence type="evidence at transcript level"/>